<accession>A0ZZ64</accession>
<feature type="initiator methionine" description="Removed" evidence="1">
    <location>
        <position position="1"/>
    </location>
</feature>
<feature type="chain" id="PRO_0000275755" description="Photosystem II reaction center protein H">
    <location>
        <begin position="2"/>
        <end position="73"/>
    </location>
</feature>
<feature type="transmembrane region" description="Helical" evidence="2">
    <location>
        <begin position="41"/>
        <end position="61"/>
    </location>
</feature>
<feature type="modified residue" description="Phosphothreonine" evidence="2">
    <location>
        <position position="3"/>
    </location>
</feature>
<feature type="modified residue" description="Phosphothreonine" evidence="2">
    <location>
        <position position="5"/>
    </location>
</feature>
<dbReference type="EMBL" id="AP009123">
    <property type="protein sequence ID" value="BAF41276.1"/>
    <property type="molecule type" value="Genomic_DNA"/>
</dbReference>
<dbReference type="RefSeq" id="YP_913216.1">
    <property type="nucleotide sequence ID" value="NC_008641.1"/>
</dbReference>
<dbReference type="SMR" id="A0ZZ64"/>
<dbReference type="GeneID" id="4575222"/>
<dbReference type="OrthoDB" id="946355at2759"/>
<dbReference type="GO" id="GO:0009535">
    <property type="term" value="C:chloroplast thylakoid membrane"/>
    <property type="evidence" value="ECO:0007669"/>
    <property type="project" value="UniProtKB-SubCell"/>
</dbReference>
<dbReference type="GO" id="GO:0009523">
    <property type="term" value="C:photosystem II"/>
    <property type="evidence" value="ECO:0007669"/>
    <property type="project" value="UniProtKB-KW"/>
</dbReference>
<dbReference type="GO" id="GO:0042301">
    <property type="term" value="F:phosphate ion binding"/>
    <property type="evidence" value="ECO:0007669"/>
    <property type="project" value="InterPro"/>
</dbReference>
<dbReference type="GO" id="GO:0015979">
    <property type="term" value="P:photosynthesis"/>
    <property type="evidence" value="ECO:0007669"/>
    <property type="project" value="UniProtKB-UniRule"/>
</dbReference>
<dbReference type="GO" id="GO:0050821">
    <property type="term" value="P:protein stabilization"/>
    <property type="evidence" value="ECO:0007669"/>
    <property type="project" value="InterPro"/>
</dbReference>
<dbReference type="FunFam" id="1.20.5.880:FF:000001">
    <property type="entry name" value="Photosystem II reaction center protein H"/>
    <property type="match status" value="1"/>
</dbReference>
<dbReference type="Gene3D" id="1.20.5.880">
    <property type="entry name" value="Photosystem II reaction center protein H"/>
    <property type="match status" value="1"/>
</dbReference>
<dbReference type="HAMAP" id="MF_00752">
    <property type="entry name" value="PSII_PsbH"/>
    <property type="match status" value="1"/>
</dbReference>
<dbReference type="InterPro" id="IPR001056">
    <property type="entry name" value="PSII_PsbH"/>
</dbReference>
<dbReference type="InterPro" id="IPR036863">
    <property type="entry name" value="PSII_PsbH_sf"/>
</dbReference>
<dbReference type="NCBIfam" id="NF002728">
    <property type="entry name" value="PRK02624.1"/>
    <property type="match status" value="1"/>
</dbReference>
<dbReference type="PANTHER" id="PTHR34469">
    <property type="entry name" value="PHOTOSYSTEM II REACTION CENTER PROTEIN H"/>
    <property type="match status" value="1"/>
</dbReference>
<dbReference type="PANTHER" id="PTHR34469:SF4">
    <property type="entry name" value="PHOTOSYSTEM II REACTION CENTER PROTEIN H"/>
    <property type="match status" value="1"/>
</dbReference>
<dbReference type="Pfam" id="PF00737">
    <property type="entry name" value="PsbH"/>
    <property type="match status" value="1"/>
</dbReference>
<dbReference type="SUPFAM" id="SSF161025">
    <property type="entry name" value="Photosystem II 10 kDa phosphoprotein PsbH"/>
    <property type="match status" value="1"/>
</dbReference>
<sequence length="73" mass="7778">MATQTVEGSSRSGPRRTVVGDFLKPLNSEYGKVAPGWGTTPLMGVAMALFAIFLSIILEIYNSSVLLDGISMN</sequence>
<protein>
    <recommendedName>
        <fullName evidence="2">Photosystem II reaction center protein H</fullName>
        <shortName evidence="2">PSII-H</shortName>
    </recommendedName>
    <alternativeName>
        <fullName evidence="2">Photosystem II 10 kDa phosphoprotein</fullName>
    </alternativeName>
</protein>
<organism>
    <name type="scientific">Gossypium barbadense</name>
    <name type="common">Sea Island cotton</name>
    <name type="synonym">Hibiscus barbadensis</name>
    <dbReference type="NCBI Taxonomy" id="3634"/>
    <lineage>
        <taxon>Eukaryota</taxon>
        <taxon>Viridiplantae</taxon>
        <taxon>Streptophyta</taxon>
        <taxon>Embryophyta</taxon>
        <taxon>Tracheophyta</taxon>
        <taxon>Spermatophyta</taxon>
        <taxon>Magnoliopsida</taxon>
        <taxon>eudicotyledons</taxon>
        <taxon>Gunneridae</taxon>
        <taxon>Pentapetalae</taxon>
        <taxon>rosids</taxon>
        <taxon>malvids</taxon>
        <taxon>Malvales</taxon>
        <taxon>Malvaceae</taxon>
        <taxon>Malvoideae</taxon>
        <taxon>Gossypium</taxon>
    </lineage>
</organism>
<evidence type="ECO:0000250" key="1">
    <source>
        <dbReference type="UniProtKB" id="P56780"/>
    </source>
</evidence>
<evidence type="ECO:0000255" key="2">
    <source>
        <dbReference type="HAMAP-Rule" id="MF_00752"/>
    </source>
</evidence>
<keyword id="KW-0150">Chloroplast</keyword>
<keyword id="KW-0472">Membrane</keyword>
<keyword id="KW-0597">Phosphoprotein</keyword>
<keyword id="KW-0602">Photosynthesis</keyword>
<keyword id="KW-0604">Photosystem II</keyword>
<keyword id="KW-0934">Plastid</keyword>
<keyword id="KW-0793">Thylakoid</keyword>
<keyword id="KW-0812">Transmembrane</keyword>
<keyword id="KW-1133">Transmembrane helix</keyword>
<geneLocation type="chloroplast"/>
<reference key="1">
    <citation type="journal article" date="2006" name="Genes Genet. Syst.">
        <title>Complete nucleotide sequence of the cotton (Gossypium barbadense L.) chloroplast genome with a comparative analysis of sequences among 9 dicot plants.</title>
        <authorList>
            <person name="Ibrahim R.I.H."/>
            <person name="Azuma J."/>
            <person name="Sakamoto M."/>
        </authorList>
    </citation>
    <scope>NUCLEOTIDE SEQUENCE [LARGE SCALE GENOMIC DNA]</scope>
</reference>
<comment type="function">
    <text evidence="2">One of the components of the core complex of photosystem II (PSII), required for its stability and/or assembly. PSII is a light-driven water:plastoquinone oxidoreductase that uses light energy to abstract electrons from H(2)O, generating O(2) and a proton gradient subsequently used for ATP formation. It consists of a core antenna complex that captures photons, and an electron transfer chain that converts photonic excitation into a charge separation.</text>
</comment>
<comment type="subunit">
    <text evidence="2">PSII is composed of 1 copy each of membrane proteins PsbA, PsbB, PsbC, PsbD, PsbE, PsbF, PsbH, PsbI, PsbJ, PsbK, PsbL, PsbM, PsbT, PsbX, PsbY, PsbZ, Psb30/Ycf12, at least 3 peripheral proteins of the oxygen-evolving complex and a large number of cofactors. It forms dimeric complexes.</text>
</comment>
<comment type="subcellular location">
    <subcellularLocation>
        <location evidence="2">Plastid</location>
        <location evidence="2">Chloroplast thylakoid membrane</location>
        <topology evidence="2">Single-pass membrane protein</topology>
    </subcellularLocation>
</comment>
<comment type="PTM">
    <text evidence="2">Phosphorylation is a light-dependent reaction catalyzed by a membrane-bound kinase; phosphorylation occurs on Thr residue(s) in the N-terminus of the protein.</text>
</comment>
<comment type="similarity">
    <text evidence="2">Belongs to the PsbH family.</text>
</comment>
<name>PSBH_GOSBA</name>
<proteinExistence type="inferred from homology"/>
<gene>
    <name evidence="2" type="primary">psbH</name>
</gene>